<protein>
    <recommendedName>
        <fullName evidence="1">Sulfate adenylyltransferase</fullName>
        <ecNumber evidence="1">2.7.7.4</ecNumber>
    </recommendedName>
    <alternativeName>
        <fullName evidence="1">ATP-sulfurylase</fullName>
    </alternativeName>
    <alternativeName>
        <fullName evidence="1">Sulfate adenylate transferase</fullName>
        <shortName evidence="1">SAT</shortName>
    </alternativeName>
</protein>
<reference key="1">
    <citation type="journal article" date="2006" name="J. Bacteriol.">
        <title>The genome sequence of the obligately chemolithoautotrophic, facultatively anaerobic bacterium Thiobacillus denitrificans.</title>
        <authorList>
            <person name="Beller H.R."/>
            <person name="Chain P.S."/>
            <person name="Letain T.E."/>
            <person name="Chakicherla A."/>
            <person name="Larimer F.W."/>
            <person name="Richardson P.M."/>
            <person name="Coleman M.A."/>
            <person name="Wood A.P."/>
            <person name="Kelly D.P."/>
        </authorList>
    </citation>
    <scope>NUCLEOTIDE SEQUENCE [LARGE SCALE GENOMIC DNA]</scope>
    <source>
        <strain>ATCC 25259 / T1</strain>
    </source>
</reference>
<keyword id="KW-0067">ATP-binding</keyword>
<keyword id="KW-0547">Nucleotide-binding</keyword>
<keyword id="KW-0548">Nucleotidyltransferase</keyword>
<keyword id="KW-1185">Reference proteome</keyword>
<keyword id="KW-0808">Transferase</keyword>
<feature type="chain" id="PRO_0000340638" description="Sulfate adenylyltransferase">
    <location>
        <begin position="1"/>
        <end position="402"/>
    </location>
</feature>
<gene>
    <name evidence="1" type="primary">sat</name>
    <name type="ordered locus">Tbd_0874</name>
</gene>
<name>SAT_THIDA</name>
<sequence length="402" mass="44316">MSKLVRPHGGGELKPLLLTGDALSAEKARAASLPQLKMSSRETGDLIMMGIGGFTPLDGFMTKSDWQGVCDGYKMTNGLFWPIPITLSTDDESIKDGDELALVDAETGEIMGTMKVTDKYTIDKAHECMQVYKTTDMEHPGVKMVMAQGKYNLAGPVKVLSTGNFKEEYGEQFMTPAETRAKFEQMGWSRVAAFQTRNPMHRSHEYLAKIAIETMDGVLVHSLLGALKPGDIPAEVRSEAIATLIDNYFAPNTVIQAGYPLDMRYAGPREALLHALFRQNYGCSHLIVGRDHAGVGDYYGPFDAQKIFDEIPKGSLETVNMNIDWTFWCKKCGGMASQRTCPHTKDDRILLSGTKVRAMLSEGQDLPVEFSRPEVAKVLQKYYAGLSAEQNVKVELKGHSAA</sequence>
<dbReference type="EC" id="2.7.7.4" evidence="1"/>
<dbReference type="EMBL" id="CP000116">
    <property type="protein sequence ID" value="AAZ96827.1"/>
    <property type="molecule type" value="Genomic_DNA"/>
</dbReference>
<dbReference type="RefSeq" id="WP_011311386.1">
    <property type="nucleotide sequence ID" value="NC_007404.1"/>
</dbReference>
<dbReference type="SMR" id="Q3SEZ6"/>
<dbReference type="STRING" id="292415.Tbd_0874"/>
<dbReference type="KEGG" id="tbd:Tbd_0874"/>
<dbReference type="eggNOG" id="COG2046">
    <property type="taxonomic scope" value="Bacteria"/>
</dbReference>
<dbReference type="HOGENOM" id="CLU_022950_1_1_4"/>
<dbReference type="OrthoDB" id="9804504at2"/>
<dbReference type="BRENDA" id="2.7.7.4">
    <property type="organism ID" value="11660"/>
</dbReference>
<dbReference type="UniPathway" id="UPA00140">
    <property type="reaction ID" value="UER00204"/>
</dbReference>
<dbReference type="Proteomes" id="UP000008291">
    <property type="component" value="Chromosome"/>
</dbReference>
<dbReference type="GO" id="GO:0005524">
    <property type="term" value="F:ATP binding"/>
    <property type="evidence" value="ECO:0007669"/>
    <property type="project" value="UniProtKB-KW"/>
</dbReference>
<dbReference type="GO" id="GO:0004781">
    <property type="term" value="F:sulfate adenylyltransferase (ATP) activity"/>
    <property type="evidence" value="ECO:0007669"/>
    <property type="project" value="UniProtKB-UniRule"/>
</dbReference>
<dbReference type="GO" id="GO:0070814">
    <property type="term" value="P:hydrogen sulfide biosynthetic process"/>
    <property type="evidence" value="ECO:0007669"/>
    <property type="project" value="UniProtKB-UniRule"/>
</dbReference>
<dbReference type="GO" id="GO:0000103">
    <property type="term" value="P:sulfate assimilation"/>
    <property type="evidence" value="ECO:0007669"/>
    <property type="project" value="UniProtKB-UniRule"/>
</dbReference>
<dbReference type="CDD" id="cd00517">
    <property type="entry name" value="ATPS"/>
    <property type="match status" value="1"/>
</dbReference>
<dbReference type="Gene3D" id="3.40.50.620">
    <property type="entry name" value="HUPs"/>
    <property type="match status" value="1"/>
</dbReference>
<dbReference type="Gene3D" id="3.10.400.10">
    <property type="entry name" value="Sulfate adenylyltransferase"/>
    <property type="match status" value="1"/>
</dbReference>
<dbReference type="HAMAP" id="MF_00066">
    <property type="entry name" value="Sulf_adenylyltr"/>
    <property type="match status" value="1"/>
</dbReference>
<dbReference type="InterPro" id="IPR025980">
    <property type="entry name" value="ATP-Sase_PUA-like_dom"/>
</dbReference>
<dbReference type="InterPro" id="IPR015947">
    <property type="entry name" value="PUA-like_sf"/>
</dbReference>
<dbReference type="InterPro" id="IPR014729">
    <property type="entry name" value="Rossmann-like_a/b/a_fold"/>
</dbReference>
<dbReference type="InterPro" id="IPR020792">
    <property type="entry name" value="SO4_adenylyltransferase_pro"/>
</dbReference>
<dbReference type="InterPro" id="IPR024951">
    <property type="entry name" value="Sulfurylase_cat_dom"/>
</dbReference>
<dbReference type="InterPro" id="IPR002650">
    <property type="entry name" value="Sulphate_adenylyltransferase"/>
</dbReference>
<dbReference type="NCBIfam" id="NF003166">
    <property type="entry name" value="PRK04149.1"/>
    <property type="match status" value="1"/>
</dbReference>
<dbReference type="NCBIfam" id="TIGR00339">
    <property type="entry name" value="sopT"/>
    <property type="match status" value="1"/>
</dbReference>
<dbReference type="PANTHER" id="PTHR43509">
    <property type="match status" value="1"/>
</dbReference>
<dbReference type="PANTHER" id="PTHR43509:SF1">
    <property type="entry name" value="SULFATE ADENYLYLTRANSFERASE"/>
    <property type="match status" value="1"/>
</dbReference>
<dbReference type="Pfam" id="PF01747">
    <property type="entry name" value="ATP-sulfurylase"/>
    <property type="match status" value="1"/>
</dbReference>
<dbReference type="Pfam" id="PF14306">
    <property type="entry name" value="PUA_2"/>
    <property type="match status" value="1"/>
</dbReference>
<dbReference type="SUPFAM" id="SSF52374">
    <property type="entry name" value="Nucleotidylyl transferase"/>
    <property type="match status" value="1"/>
</dbReference>
<dbReference type="SUPFAM" id="SSF88697">
    <property type="entry name" value="PUA domain-like"/>
    <property type="match status" value="1"/>
</dbReference>
<evidence type="ECO:0000255" key="1">
    <source>
        <dbReference type="HAMAP-Rule" id="MF_00066"/>
    </source>
</evidence>
<accession>Q3SEZ6</accession>
<comment type="catalytic activity">
    <reaction evidence="1">
        <text>sulfate + ATP + H(+) = adenosine 5'-phosphosulfate + diphosphate</text>
        <dbReference type="Rhea" id="RHEA:18133"/>
        <dbReference type="ChEBI" id="CHEBI:15378"/>
        <dbReference type="ChEBI" id="CHEBI:16189"/>
        <dbReference type="ChEBI" id="CHEBI:30616"/>
        <dbReference type="ChEBI" id="CHEBI:33019"/>
        <dbReference type="ChEBI" id="CHEBI:58243"/>
        <dbReference type="EC" id="2.7.7.4"/>
    </reaction>
</comment>
<comment type="pathway">
    <text evidence="1">Sulfur metabolism; hydrogen sulfide biosynthesis; sulfite from sulfate: step 1/3.</text>
</comment>
<comment type="similarity">
    <text evidence="1">Belongs to the sulfate adenylyltransferase family.</text>
</comment>
<proteinExistence type="inferred from homology"/>
<organism>
    <name type="scientific">Thiobacillus denitrificans (strain ATCC 25259 / T1)</name>
    <dbReference type="NCBI Taxonomy" id="292415"/>
    <lineage>
        <taxon>Bacteria</taxon>
        <taxon>Pseudomonadati</taxon>
        <taxon>Pseudomonadota</taxon>
        <taxon>Betaproteobacteria</taxon>
        <taxon>Nitrosomonadales</taxon>
        <taxon>Thiobacillaceae</taxon>
        <taxon>Thiobacillus</taxon>
    </lineage>
</organism>